<reference key="1">
    <citation type="journal article" date="2002" name="Nature">
        <title>Genome sequence of the plant pathogen Ralstonia solanacearum.</title>
        <authorList>
            <person name="Salanoubat M."/>
            <person name="Genin S."/>
            <person name="Artiguenave F."/>
            <person name="Gouzy J."/>
            <person name="Mangenot S."/>
            <person name="Arlat M."/>
            <person name="Billault A."/>
            <person name="Brottier P."/>
            <person name="Camus J.-C."/>
            <person name="Cattolico L."/>
            <person name="Chandler M."/>
            <person name="Choisne N."/>
            <person name="Claudel-Renard C."/>
            <person name="Cunnac S."/>
            <person name="Demange N."/>
            <person name="Gaspin C."/>
            <person name="Lavie M."/>
            <person name="Moisan A."/>
            <person name="Robert C."/>
            <person name="Saurin W."/>
            <person name="Schiex T."/>
            <person name="Siguier P."/>
            <person name="Thebault P."/>
            <person name="Whalen M."/>
            <person name="Wincker P."/>
            <person name="Levy M."/>
            <person name="Weissenbach J."/>
            <person name="Boucher C.A."/>
        </authorList>
    </citation>
    <scope>NUCLEOTIDE SEQUENCE [LARGE SCALE GENOMIC DNA]</scope>
    <source>
        <strain>ATCC BAA-1114 / GMI1000</strain>
    </source>
</reference>
<evidence type="ECO:0000255" key="1">
    <source>
        <dbReference type="HAMAP-Rule" id="MF_01121"/>
    </source>
</evidence>
<evidence type="ECO:0000255" key="2">
    <source>
        <dbReference type="PROSITE-ProRule" id="PRU00236"/>
    </source>
</evidence>
<protein>
    <recommendedName>
        <fullName evidence="1">NAD-dependent protein deacylase</fullName>
        <ecNumber evidence="1 2">2.3.1.286</ecNumber>
    </recommendedName>
    <alternativeName>
        <fullName evidence="1">Regulatory protein SIR2 homolog</fullName>
    </alternativeName>
</protein>
<accession>Q8Y015</accession>
<proteinExistence type="inferred from homology"/>
<feature type="chain" id="PRO_0000110343" description="NAD-dependent protein deacylase">
    <location>
        <begin position="1"/>
        <end position="246"/>
    </location>
</feature>
<feature type="domain" description="Deacetylase sirtuin-type" evidence="2">
    <location>
        <begin position="2"/>
        <end position="246"/>
    </location>
</feature>
<feature type="active site" description="Proton acceptor" evidence="2">
    <location>
        <position position="125"/>
    </location>
</feature>
<feature type="binding site" evidence="1">
    <location>
        <begin position="29"/>
        <end position="49"/>
    </location>
    <ligand>
        <name>NAD(+)</name>
        <dbReference type="ChEBI" id="CHEBI:57540"/>
    </ligand>
</feature>
<feature type="binding site" evidence="1">
    <location>
        <position position="74"/>
    </location>
    <ligand>
        <name>substrate</name>
    </ligand>
</feature>
<feature type="binding site" evidence="1">
    <location>
        <position position="77"/>
    </location>
    <ligand>
        <name>substrate</name>
    </ligand>
</feature>
<feature type="binding site" evidence="1">
    <location>
        <begin position="107"/>
        <end position="110"/>
    </location>
    <ligand>
        <name>NAD(+)</name>
        <dbReference type="ChEBI" id="CHEBI:57540"/>
    </ligand>
</feature>
<feature type="binding site" evidence="1">
    <location>
        <position position="137"/>
    </location>
    <ligand>
        <name>Zn(2+)</name>
        <dbReference type="ChEBI" id="CHEBI:29105"/>
    </ligand>
</feature>
<feature type="binding site" evidence="1">
    <location>
        <position position="140"/>
    </location>
    <ligand>
        <name>Zn(2+)</name>
        <dbReference type="ChEBI" id="CHEBI:29105"/>
    </ligand>
</feature>
<feature type="binding site" evidence="1">
    <location>
        <position position="153"/>
    </location>
    <ligand>
        <name>Zn(2+)</name>
        <dbReference type="ChEBI" id="CHEBI:29105"/>
    </ligand>
</feature>
<feature type="binding site" evidence="1">
    <location>
        <position position="156"/>
    </location>
    <ligand>
        <name>Zn(2+)</name>
        <dbReference type="ChEBI" id="CHEBI:29105"/>
    </ligand>
</feature>
<feature type="binding site" evidence="1">
    <location>
        <begin position="193"/>
        <end position="195"/>
    </location>
    <ligand>
        <name>NAD(+)</name>
        <dbReference type="ChEBI" id="CHEBI:57540"/>
    </ligand>
</feature>
<feature type="binding site" evidence="1">
    <location>
        <begin position="219"/>
        <end position="221"/>
    </location>
    <ligand>
        <name>NAD(+)</name>
        <dbReference type="ChEBI" id="CHEBI:57540"/>
    </ligand>
</feature>
<feature type="binding site" evidence="1">
    <location>
        <position position="237"/>
    </location>
    <ligand>
        <name>NAD(+)</name>
        <dbReference type="ChEBI" id="CHEBI:57540"/>
    </ligand>
</feature>
<sequence length="246" mass="26062">MPTAVSDAAAPAQARAWIEAAERVMVLTGAGVSAESGVPTFRDALTGLWARFNPEDLATEAAYREHPRMVWDWYQERRARVSQVQPNPAHLAIAALATRKTVALVTQNVDGLHQRAGSVGVIELHGNLFANKWLDGCGKCDVATAEPGRPPRCAACGAMLRPGVVWFGERLPVVANYRAEEAANTCDVCLVVGTSGMVYPAAGLPGLAKDHGARVIVVNPEPSVLDETADLVIHQPAGVCLPAMLA</sequence>
<gene>
    <name evidence="1" type="primary">cobB</name>
    <name type="ordered locus">RSc1230</name>
    <name type="ORF">RS02737</name>
</gene>
<organism>
    <name type="scientific">Ralstonia nicotianae (strain ATCC BAA-1114 / GMI1000)</name>
    <name type="common">Ralstonia solanacearum</name>
    <dbReference type="NCBI Taxonomy" id="267608"/>
    <lineage>
        <taxon>Bacteria</taxon>
        <taxon>Pseudomonadati</taxon>
        <taxon>Pseudomonadota</taxon>
        <taxon>Betaproteobacteria</taxon>
        <taxon>Burkholderiales</taxon>
        <taxon>Burkholderiaceae</taxon>
        <taxon>Ralstonia</taxon>
        <taxon>Ralstonia solanacearum species complex</taxon>
    </lineage>
</organism>
<keyword id="KW-0963">Cytoplasm</keyword>
<keyword id="KW-0479">Metal-binding</keyword>
<keyword id="KW-0520">NAD</keyword>
<keyword id="KW-1185">Reference proteome</keyword>
<keyword id="KW-0808">Transferase</keyword>
<keyword id="KW-0862">Zinc</keyword>
<comment type="function">
    <text evidence="1">NAD-dependent lysine deacetylase and desuccinylase that specifically removes acetyl and succinyl groups on target proteins. Modulates the activities of several proteins which are inactive in their acylated form.</text>
</comment>
<comment type="catalytic activity">
    <reaction evidence="1">
        <text>N(6)-acetyl-L-lysyl-[protein] + NAD(+) + H2O = 2''-O-acetyl-ADP-D-ribose + nicotinamide + L-lysyl-[protein]</text>
        <dbReference type="Rhea" id="RHEA:43636"/>
        <dbReference type="Rhea" id="RHEA-COMP:9752"/>
        <dbReference type="Rhea" id="RHEA-COMP:10731"/>
        <dbReference type="ChEBI" id="CHEBI:15377"/>
        <dbReference type="ChEBI" id="CHEBI:17154"/>
        <dbReference type="ChEBI" id="CHEBI:29969"/>
        <dbReference type="ChEBI" id="CHEBI:57540"/>
        <dbReference type="ChEBI" id="CHEBI:61930"/>
        <dbReference type="ChEBI" id="CHEBI:83767"/>
        <dbReference type="EC" id="2.3.1.286"/>
    </reaction>
</comment>
<comment type="catalytic activity">
    <reaction evidence="1">
        <text>N(6)-succinyl-L-lysyl-[protein] + NAD(+) + H2O = 2''-O-succinyl-ADP-D-ribose + nicotinamide + L-lysyl-[protein]</text>
        <dbReference type="Rhea" id="RHEA:47668"/>
        <dbReference type="Rhea" id="RHEA-COMP:9752"/>
        <dbReference type="Rhea" id="RHEA-COMP:11877"/>
        <dbReference type="ChEBI" id="CHEBI:15377"/>
        <dbReference type="ChEBI" id="CHEBI:17154"/>
        <dbReference type="ChEBI" id="CHEBI:29969"/>
        <dbReference type="ChEBI" id="CHEBI:57540"/>
        <dbReference type="ChEBI" id="CHEBI:87830"/>
        <dbReference type="ChEBI" id="CHEBI:87832"/>
    </reaction>
</comment>
<comment type="cofactor">
    <cofactor evidence="1">
        <name>Zn(2+)</name>
        <dbReference type="ChEBI" id="CHEBI:29105"/>
    </cofactor>
    <text evidence="1">Binds 1 zinc ion per subunit.</text>
</comment>
<comment type="subcellular location">
    <subcellularLocation>
        <location evidence="1">Cytoplasm</location>
    </subcellularLocation>
</comment>
<comment type="domain">
    <text evidence="1">2 residues (Tyr-74 and Arg-77) present in a large hydrophobic pocket are probably involved in substrate specificity. They are important for desuccinylation activity, but dispensable for deacetylation activity.</text>
</comment>
<comment type="similarity">
    <text evidence="1">Belongs to the sirtuin family. Class III subfamily.</text>
</comment>
<dbReference type="EC" id="2.3.1.286" evidence="1 2"/>
<dbReference type="EMBL" id="AL646052">
    <property type="protein sequence ID" value="CAD14932.1"/>
    <property type="molecule type" value="Genomic_DNA"/>
</dbReference>
<dbReference type="SMR" id="Q8Y015"/>
<dbReference type="STRING" id="267608.RSc1230"/>
<dbReference type="EnsemblBacteria" id="CAD14932">
    <property type="protein sequence ID" value="CAD14932"/>
    <property type="gene ID" value="RSc1230"/>
</dbReference>
<dbReference type="KEGG" id="rso:RSc1230"/>
<dbReference type="eggNOG" id="COG0846">
    <property type="taxonomic scope" value="Bacteria"/>
</dbReference>
<dbReference type="HOGENOM" id="CLU_023643_3_1_4"/>
<dbReference type="Proteomes" id="UP000001436">
    <property type="component" value="Chromosome"/>
</dbReference>
<dbReference type="GO" id="GO:0005737">
    <property type="term" value="C:cytoplasm"/>
    <property type="evidence" value="ECO:0007669"/>
    <property type="project" value="UniProtKB-SubCell"/>
</dbReference>
<dbReference type="GO" id="GO:0017136">
    <property type="term" value="F:histone deacetylase activity, NAD-dependent"/>
    <property type="evidence" value="ECO:0007669"/>
    <property type="project" value="TreeGrafter"/>
</dbReference>
<dbReference type="GO" id="GO:0046872">
    <property type="term" value="F:metal ion binding"/>
    <property type="evidence" value="ECO:0007669"/>
    <property type="project" value="UniProtKB-KW"/>
</dbReference>
<dbReference type="GO" id="GO:0070403">
    <property type="term" value="F:NAD+ binding"/>
    <property type="evidence" value="ECO:0007669"/>
    <property type="project" value="UniProtKB-UniRule"/>
</dbReference>
<dbReference type="GO" id="GO:0036054">
    <property type="term" value="F:protein-malonyllysine demalonylase activity"/>
    <property type="evidence" value="ECO:0007669"/>
    <property type="project" value="InterPro"/>
</dbReference>
<dbReference type="GO" id="GO:0036055">
    <property type="term" value="F:protein-succinyllysine desuccinylase activity"/>
    <property type="evidence" value="ECO:0007669"/>
    <property type="project" value="UniProtKB-UniRule"/>
</dbReference>
<dbReference type="CDD" id="cd01412">
    <property type="entry name" value="SIRT5_Af1_CobB"/>
    <property type="match status" value="1"/>
</dbReference>
<dbReference type="Gene3D" id="3.30.1600.10">
    <property type="entry name" value="SIR2/SIRT2 'Small Domain"/>
    <property type="match status" value="1"/>
</dbReference>
<dbReference type="Gene3D" id="3.40.50.1220">
    <property type="entry name" value="TPP-binding domain"/>
    <property type="match status" value="1"/>
</dbReference>
<dbReference type="HAMAP" id="MF_01121">
    <property type="entry name" value="Sirtuin_ClassIII"/>
    <property type="match status" value="1"/>
</dbReference>
<dbReference type="InterPro" id="IPR029035">
    <property type="entry name" value="DHS-like_NAD/FAD-binding_dom"/>
</dbReference>
<dbReference type="InterPro" id="IPR050134">
    <property type="entry name" value="NAD-dep_sirtuin_deacylases"/>
</dbReference>
<dbReference type="InterPro" id="IPR003000">
    <property type="entry name" value="Sirtuin"/>
</dbReference>
<dbReference type="InterPro" id="IPR026591">
    <property type="entry name" value="Sirtuin_cat_small_dom_sf"/>
</dbReference>
<dbReference type="InterPro" id="IPR027546">
    <property type="entry name" value="Sirtuin_class_III"/>
</dbReference>
<dbReference type="InterPro" id="IPR026590">
    <property type="entry name" value="Ssirtuin_cat_dom"/>
</dbReference>
<dbReference type="NCBIfam" id="NF001753">
    <property type="entry name" value="PRK00481.1-3"/>
    <property type="match status" value="1"/>
</dbReference>
<dbReference type="PANTHER" id="PTHR11085">
    <property type="entry name" value="NAD-DEPENDENT PROTEIN DEACYLASE SIRTUIN-5, MITOCHONDRIAL-RELATED"/>
    <property type="match status" value="1"/>
</dbReference>
<dbReference type="PANTHER" id="PTHR11085:SF10">
    <property type="entry name" value="NAD-DEPENDENT PROTEIN DEACYLASE SIRTUIN-5, MITOCHONDRIAL-RELATED"/>
    <property type="match status" value="1"/>
</dbReference>
<dbReference type="Pfam" id="PF02146">
    <property type="entry name" value="SIR2"/>
    <property type="match status" value="1"/>
</dbReference>
<dbReference type="SUPFAM" id="SSF52467">
    <property type="entry name" value="DHS-like NAD/FAD-binding domain"/>
    <property type="match status" value="1"/>
</dbReference>
<dbReference type="PROSITE" id="PS50305">
    <property type="entry name" value="SIRTUIN"/>
    <property type="match status" value="1"/>
</dbReference>
<name>NPD_RALN1</name>